<accession>Q55393</accession>
<reference key="1">
    <citation type="journal article" date="1995" name="DNA Res.">
        <title>Sequence analysis of the genome of the unicellular cyanobacterium Synechocystis sp. strain PCC6803. I. Sequence features in the 1 Mb region from map positions 64% to 92% of the genome.</title>
        <authorList>
            <person name="Kaneko T."/>
            <person name="Tanaka A."/>
            <person name="Sato S."/>
            <person name="Kotani H."/>
            <person name="Sazuka T."/>
            <person name="Miyajima N."/>
            <person name="Sugiura M."/>
            <person name="Tabata S."/>
        </authorList>
    </citation>
    <scope>NUCLEOTIDE SEQUENCE [LARGE SCALE GENOMIC DNA]</scope>
    <source>
        <strain>ATCC 27184 / PCC 6803 / N-1</strain>
    </source>
</reference>
<reference key="2">
    <citation type="journal article" date="1996" name="DNA Res.">
        <title>Sequence analysis of the genome of the unicellular cyanobacterium Synechocystis sp. strain PCC6803. II. Sequence determination of the entire genome and assignment of potential protein-coding regions.</title>
        <authorList>
            <person name="Kaneko T."/>
            <person name="Sato S."/>
            <person name="Kotani H."/>
            <person name="Tanaka A."/>
            <person name="Asamizu E."/>
            <person name="Nakamura Y."/>
            <person name="Miyajima N."/>
            <person name="Hirosawa M."/>
            <person name="Sugiura M."/>
            <person name="Sasamoto S."/>
            <person name="Kimura T."/>
            <person name="Hosouchi T."/>
            <person name="Matsuno A."/>
            <person name="Muraki A."/>
            <person name="Nakazaki N."/>
            <person name="Naruo K."/>
            <person name="Okumura S."/>
            <person name="Shimpo S."/>
            <person name="Takeuchi C."/>
            <person name="Wada T."/>
            <person name="Watanabe A."/>
            <person name="Yamada M."/>
            <person name="Yasuda M."/>
            <person name="Tabata S."/>
        </authorList>
    </citation>
    <scope>NUCLEOTIDE SEQUENCE [LARGE SCALE GENOMIC DNA]</scope>
    <source>
        <strain>ATCC 27184 / PCC 6803 / Kazusa</strain>
    </source>
</reference>
<reference key="3">
    <citation type="journal article" date="1998" name="Eur. J. Biochem.">
        <title>A family of flavoproteins in the domains Archaea and Bacteria.</title>
        <authorList>
            <person name="Wasserfallen A."/>
            <person name="Ragettli S."/>
            <person name="Jouanneau Y."/>
            <person name="Leisinger T."/>
        </authorList>
    </citation>
    <scope>CHARACTERIZATION</scope>
</reference>
<reference key="4">
    <citation type="journal article" date="2002" name="Biochem. Biophys. Res. Commun.">
        <title>Module fusion in an A-type flavoprotein from the cyanobacterium Synechocystis condenses a multiple-component pathway in a single polypeptide chain.</title>
        <authorList>
            <person name="Vicente J.B."/>
            <person name="Gomes C.M."/>
            <person name="Wasserfallen A."/>
            <person name="Teixeira M."/>
        </authorList>
    </citation>
    <scope>CHARACTERIZATION</scope>
</reference>
<name>DFA1_SYNY3</name>
<dbReference type="EC" id="1.-.-.-"/>
<dbReference type="EMBL" id="BA000022">
    <property type="protein sequence ID" value="BAA10483.1"/>
    <property type="molecule type" value="Genomic_DNA"/>
</dbReference>
<dbReference type="PIR" id="S75748">
    <property type="entry name" value="S75748"/>
</dbReference>
<dbReference type="SMR" id="Q55393"/>
<dbReference type="IntAct" id="Q55393">
    <property type="interactions" value="1"/>
</dbReference>
<dbReference type="STRING" id="1148.gene:10499987"/>
<dbReference type="PaxDb" id="1148-1001242"/>
<dbReference type="EnsemblBacteria" id="BAA10483">
    <property type="protein sequence ID" value="BAA10483"/>
    <property type="gene ID" value="BAA10483"/>
</dbReference>
<dbReference type="KEGG" id="syn:sll0550"/>
<dbReference type="eggNOG" id="COG0426">
    <property type="taxonomic scope" value="Bacteria"/>
</dbReference>
<dbReference type="eggNOG" id="COG1853">
    <property type="taxonomic scope" value="Bacteria"/>
</dbReference>
<dbReference type="InParanoid" id="Q55393"/>
<dbReference type="PhylomeDB" id="Q55393"/>
<dbReference type="Proteomes" id="UP000001425">
    <property type="component" value="Chromosome"/>
</dbReference>
<dbReference type="GO" id="GO:0010181">
    <property type="term" value="F:FMN binding"/>
    <property type="evidence" value="ECO:0007669"/>
    <property type="project" value="InterPro"/>
</dbReference>
<dbReference type="GO" id="GO:0046872">
    <property type="term" value="F:metal ion binding"/>
    <property type="evidence" value="ECO:0007669"/>
    <property type="project" value="UniProtKB-KW"/>
</dbReference>
<dbReference type="GO" id="GO:0016646">
    <property type="term" value="F:oxidoreductase activity, acting on the CH-NH group of donors, NAD or NADP as acceptor"/>
    <property type="evidence" value="ECO:0007669"/>
    <property type="project" value="UniProtKB-ARBA"/>
</dbReference>
<dbReference type="CDD" id="cd07709">
    <property type="entry name" value="flavodiiron_proteins_MBL-fold"/>
    <property type="match status" value="1"/>
</dbReference>
<dbReference type="Gene3D" id="3.40.50.360">
    <property type="match status" value="1"/>
</dbReference>
<dbReference type="Gene3D" id="2.30.110.10">
    <property type="entry name" value="Electron Transport, Fmn-binding Protein, Chain A"/>
    <property type="match status" value="1"/>
</dbReference>
<dbReference type="Gene3D" id="3.60.15.10">
    <property type="entry name" value="Ribonuclease Z/Hydroxyacylglutathione hydrolase-like"/>
    <property type="match status" value="1"/>
</dbReference>
<dbReference type="InterPro" id="IPR002563">
    <property type="entry name" value="Flavin_Rdtase-like_dom"/>
</dbReference>
<dbReference type="InterPro" id="IPR008254">
    <property type="entry name" value="Flavodoxin/NO_synth"/>
</dbReference>
<dbReference type="InterPro" id="IPR029039">
    <property type="entry name" value="Flavoprotein-like_sf"/>
</dbReference>
<dbReference type="InterPro" id="IPR001279">
    <property type="entry name" value="Metallo-B-lactamas"/>
</dbReference>
<dbReference type="InterPro" id="IPR051285">
    <property type="entry name" value="NADH_oxidoreductase_modular"/>
</dbReference>
<dbReference type="InterPro" id="IPR045761">
    <property type="entry name" value="ODP_dom"/>
</dbReference>
<dbReference type="InterPro" id="IPR036866">
    <property type="entry name" value="RibonucZ/Hydroxyglut_hydro"/>
</dbReference>
<dbReference type="InterPro" id="IPR012349">
    <property type="entry name" value="Split_barrel_FMN-bd"/>
</dbReference>
<dbReference type="PANTHER" id="PTHR32145">
    <property type="entry name" value="DIFLAVIN FLAVOPROTEIN A 2-RELATED"/>
    <property type="match status" value="1"/>
</dbReference>
<dbReference type="PANTHER" id="PTHR32145:SF11">
    <property type="entry name" value="DIFLAVIN FLAVOPROTEIN A 2-RELATED"/>
    <property type="match status" value="1"/>
</dbReference>
<dbReference type="Pfam" id="PF01613">
    <property type="entry name" value="Flavin_Reduct"/>
    <property type="match status" value="1"/>
</dbReference>
<dbReference type="Pfam" id="PF00258">
    <property type="entry name" value="Flavodoxin_1"/>
    <property type="match status" value="1"/>
</dbReference>
<dbReference type="Pfam" id="PF19583">
    <property type="entry name" value="ODP"/>
    <property type="match status" value="1"/>
</dbReference>
<dbReference type="SMART" id="SM00903">
    <property type="entry name" value="Flavin_Reduct"/>
    <property type="match status" value="1"/>
</dbReference>
<dbReference type="SMART" id="SM00849">
    <property type="entry name" value="Lactamase_B"/>
    <property type="match status" value="1"/>
</dbReference>
<dbReference type="SUPFAM" id="SSF52218">
    <property type="entry name" value="Flavoproteins"/>
    <property type="match status" value="1"/>
</dbReference>
<dbReference type="SUPFAM" id="SSF50475">
    <property type="entry name" value="FMN-binding split barrel"/>
    <property type="match status" value="1"/>
</dbReference>
<dbReference type="SUPFAM" id="SSF56281">
    <property type="entry name" value="Metallo-hydrolase/oxidoreductase"/>
    <property type="match status" value="1"/>
</dbReference>
<dbReference type="PROSITE" id="PS50902">
    <property type="entry name" value="FLAVODOXIN_LIKE"/>
    <property type="match status" value="1"/>
</dbReference>
<comment type="function">
    <text>Mediates electron transfer from NADH to oxygen, reducing it to water. This modular protein has 3 redox cofactors, in other organisms the same activity requires 2 or 3 proteins.</text>
</comment>
<comment type="cofactor">
    <cofactor>
        <name>Fe cation</name>
        <dbReference type="ChEBI" id="CHEBI:24875"/>
    </cofactor>
    <text>Binds 2 iron ions per monomer.</text>
</comment>
<comment type="cofactor">
    <cofactor>
        <name>FAD</name>
        <dbReference type="ChEBI" id="CHEBI:57692"/>
    </cofactor>
</comment>
<comment type="cofactor">
    <cofactor>
        <name>FMN</name>
        <dbReference type="ChEBI" id="CHEBI:58210"/>
    </cofactor>
</comment>
<comment type="subunit">
    <text>Homodimer.</text>
</comment>
<comment type="miscellaneous">
    <text evidence="1">By homology with NorV in E.coli, may be involved in nitric oxide detoxification.</text>
</comment>
<comment type="similarity">
    <text evidence="3">In the N-terminal section; belongs to the zinc metallo-hydrolase group 3 family.</text>
</comment>
<comment type="similarity">
    <text evidence="3">In the C-terminal section; belongs to the flavodoxin reductase family.</text>
</comment>
<evidence type="ECO:0000250" key="1"/>
<evidence type="ECO:0000255" key="2">
    <source>
        <dbReference type="PROSITE-ProRule" id="PRU00088"/>
    </source>
</evidence>
<evidence type="ECO:0000305" key="3"/>
<proteinExistence type="evidence at protein level"/>
<gene>
    <name type="primary">dfa1</name>
    <name type="ordered locus">sll0550</name>
</gene>
<feature type="chain" id="PRO_0000216801" description="Diflavin flavoprotein A 1">
    <location>
        <begin position="1"/>
        <end position="573"/>
    </location>
</feature>
<feature type="domain" description="Flavodoxin-like" evidence="2">
    <location>
        <begin position="265"/>
        <end position="401"/>
    </location>
</feature>
<feature type="region of interest" description="Zinc metallo-hydrolase">
    <location>
        <begin position="43"/>
        <end position="236"/>
    </location>
</feature>
<feature type="region of interest" description="Flavodoxin-reductase-like">
    <location>
        <begin position="424"/>
        <end position="573"/>
    </location>
</feature>
<feature type="binding site" evidence="1">
    <location>
        <position position="92"/>
    </location>
    <ligand>
        <name>Fe cation</name>
        <dbReference type="ChEBI" id="CHEBI:24875"/>
        <label>1</label>
    </ligand>
</feature>
<feature type="binding site" evidence="1">
    <location>
        <position position="94"/>
    </location>
    <ligand>
        <name>Fe cation</name>
        <dbReference type="ChEBI" id="CHEBI:24875"/>
        <label>1</label>
    </ligand>
</feature>
<feature type="binding site" evidence="1">
    <location>
        <position position="96"/>
    </location>
    <ligand>
        <name>Fe cation</name>
        <dbReference type="ChEBI" id="CHEBI:24875"/>
        <label>2</label>
    </ligand>
</feature>
<feature type="binding site" evidence="1">
    <location>
        <position position="159"/>
    </location>
    <ligand>
        <name>Fe cation</name>
        <dbReference type="ChEBI" id="CHEBI:24875"/>
        <label>1</label>
    </ligand>
</feature>
<feature type="binding site" evidence="1">
    <location>
        <position position="178"/>
    </location>
    <ligand>
        <name>Fe cation</name>
        <dbReference type="ChEBI" id="CHEBI:24875"/>
        <label>1</label>
    </ligand>
</feature>
<feature type="binding site" evidence="1">
    <location>
        <position position="178"/>
    </location>
    <ligand>
        <name>Fe cation</name>
        <dbReference type="ChEBI" id="CHEBI:24875"/>
        <label>2</label>
    </ligand>
</feature>
<feature type="binding site" evidence="1">
    <location>
        <position position="236"/>
    </location>
    <ligand>
        <name>Fe cation</name>
        <dbReference type="ChEBI" id="CHEBI:24875"/>
        <label>2</label>
    </ligand>
</feature>
<keyword id="KW-0249">Electron transport</keyword>
<keyword id="KW-0274">FAD</keyword>
<keyword id="KW-0285">Flavoprotein</keyword>
<keyword id="KW-0288">FMN</keyword>
<keyword id="KW-0408">Iron</keyword>
<keyword id="KW-0479">Metal-binding</keyword>
<keyword id="KW-0560">Oxidoreductase</keyword>
<keyword id="KW-1185">Reference proteome</keyword>
<keyword id="KW-0813">Transport</keyword>
<organism>
    <name type="scientific">Synechocystis sp. (strain ATCC 27184 / PCC 6803 / Kazusa)</name>
    <dbReference type="NCBI Taxonomy" id="1111708"/>
    <lineage>
        <taxon>Bacteria</taxon>
        <taxon>Bacillati</taxon>
        <taxon>Cyanobacteriota</taxon>
        <taxon>Cyanophyceae</taxon>
        <taxon>Synechococcales</taxon>
        <taxon>Merismopediaceae</taxon>
        <taxon>Synechocystis</taxon>
    </lineage>
</organism>
<sequence>MFTTPLPPQKRLSTQTEAIAKNITAIRSLDWDRDRFDIEFGLQNGTTYNSYLIQADKVALVDSSHEKFRQLYLDLLQGLIDPQRIDYLIVSHTEPDHSGLVKDILQLNPRITVVATKVALQFLDNFVHQPFERIQVKSGDRLDLGQGHDLEFVSAPNLHWPDTMLTYDPATEILFTCDVFGMHYCSDAVFDIDLGKIAPDYQFYYDCLMGPNARSVLAAMKRMDNLGTISTVANGHGPLLRHNVGELLHRYRHWSESQSKAEKTVVVFYVADYGYGDRLSQAIAKGITKTGVGVDMVDLSSADPQEIQELVGHASGVVLGMPPLQANADLSTNFGAVLAAMQPKQVFGLYESYGGDDEPIDPLRTKFLDLGLREAFKVIKVKDTPSESTYQLCDESGTDLGQNLIQAAKIKQLKSLDSDLEKAIGRISGGLYIITAQKGEVKGAMLASWVSQASFNPPGFTVAVAKDRAIESLMQVGDRFVLNILEEGNYQILMKHFLKRFPPGADRFAGVKTQTASNGSPILTDALAYLECEVASRMECSDHWIVYSQVTNGRVAKAEGLTAVHHRKVGNYY</sequence>
<protein>
    <recommendedName>
        <fullName>Diflavin flavoprotein A 1</fullName>
        <ecNumber>1.-.-.-</ecNumber>
    </recommendedName>
    <alternativeName>
        <fullName>NADH:oxygen oxidoreductase</fullName>
    </alternativeName>
    <alternativeName>
        <fullName>SsATF573</fullName>
    </alternativeName>
</protein>